<reference key="1">
    <citation type="journal article" date="2000" name="Nature">
        <title>Complete DNA sequence of a serogroup A strain of Neisseria meningitidis Z2491.</title>
        <authorList>
            <person name="Parkhill J."/>
            <person name="Achtman M."/>
            <person name="James K.D."/>
            <person name="Bentley S.D."/>
            <person name="Churcher C.M."/>
            <person name="Klee S.R."/>
            <person name="Morelli G."/>
            <person name="Basham D."/>
            <person name="Brown D."/>
            <person name="Chillingworth T."/>
            <person name="Davies R.M."/>
            <person name="Davis P."/>
            <person name="Devlin K."/>
            <person name="Feltwell T."/>
            <person name="Hamlin N."/>
            <person name="Holroyd S."/>
            <person name="Jagels K."/>
            <person name="Leather S."/>
            <person name="Moule S."/>
            <person name="Mungall K.L."/>
            <person name="Quail M.A."/>
            <person name="Rajandream M.A."/>
            <person name="Rutherford K.M."/>
            <person name="Simmonds M."/>
            <person name="Skelton J."/>
            <person name="Whitehead S."/>
            <person name="Spratt B.G."/>
            <person name="Barrell B.G."/>
        </authorList>
    </citation>
    <scope>NUCLEOTIDE SEQUENCE [LARGE SCALE GENOMIC DNA]</scope>
    <source>
        <strain>DSM 15465 / Z2491</strain>
    </source>
</reference>
<keyword id="KW-0963">Cytoplasm</keyword>
<keyword id="KW-0489">Methyltransferase</keyword>
<keyword id="KW-0698">rRNA processing</keyword>
<keyword id="KW-0949">S-adenosyl-L-methionine</keyword>
<keyword id="KW-0808">Transferase</keyword>
<sequence>MSGAESYRHITVLLNEAVDALAVREDGVYVDGTFGRGGHSRLILSRLGDAGRLIVFDKDPQAIAVAEELARSDKRVGVVHGGFASFQTALDGLGIGKVDGALFDLGISSPQIDDGSRGFSFRFDAPLDMRMDTTRGMSAAEWIAVASEQDLHEVIKNYGEERFSRQIARAIVAQRAESPIDTTRKLAQIVAQNVRTRERGQDPATRTFQAIRIFINRELEEVGAVLPQVMCRLKEGGRLAVIAFHSLEDRIVKQFVKKYSQHAPLPRWAAVREADLPEPPLKIAGRALKPGEAEIAANPRARSAVLRVAERTAGPIPEQSQRKTSEWQ</sequence>
<organism>
    <name type="scientific">Neisseria meningitidis serogroup A / serotype 4A (strain DSM 15465 / Z2491)</name>
    <dbReference type="NCBI Taxonomy" id="122587"/>
    <lineage>
        <taxon>Bacteria</taxon>
        <taxon>Pseudomonadati</taxon>
        <taxon>Pseudomonadota</taxon>
        <taxon>Betaproteobacteria</taxon>
        <taxon>Neisseriales</taxon>
        <taxon>Neisseriaceae</taxon>
        <taxon>Neisseria</taxon>
    </lineage>
</organism>
<comment type="function">
    <text evidence="1">Specifically methylates the N4 position of cytidine in position 1402 (C1402) of 16S rRNA.</text>
</comment>
<comment type="catalytic activity">
    <reaction evidence="1">
        <text>cytidine(1402) in 16S rRNA + S-adenosyl-L-methionine = N(4)-methylcytidine(1402) in 16S rRNA + S-adenosyl-L-homocysteine + H(+)</text>
        <dbReference type="Rhea" id="RHEA:42928"/>
        <dbReference type="Rhea" id="RHEA-COMP:10286"/>
        <dbReference type="Rhea" id="RHEA-COMP:10287"/>
        <dbReference type="ChEBI" id="CHEBI:15378"/>
        <dbReference type="ChEBI" id="CHEBI:57856"/>
        <dbReference type="ChEBI" id="CHEBI:59789"/>
        <dbReference type="ChEBI" id="CHEBI:74506"/>
        <dbReference type="ChEBI" id="CHEBI:82748"/>
        <dbReference type="EC" id="2.1.1.199"/>
    </reaction>
</comment>
<comment type="subcellular location">
    <subcellularLocation>
        <location evidence="1">Cytoplasm</location>
    </subcellularLocation>
</comment>
<comment type="similarity">
    <text evidence="1">Belongs to the methyltransferase superfamily. RsmH family.</text>
</comment>
<name>RSMH_NEIMA</name>
<dbReference type="EC" id="2.1.1.199" evidence="1"/>
<dbReference type="EMBL" id="AL157959">
    <property type="protein sequence ID" value="CAM09176.1"/>
    <property type="molecule type" value="Genomic_DNA"/>
</dbReference>
<dbReference type="PIR" id="D81778">
    <property type="entry name" value="D81778"/>
</dbReference>
<dbReference type="RefSeq" id="WP_002218781.1">
    <property type="nucleotide sequence ID" value="NC_003116.1"/>
</dbReference>
<dbReference type="SMR" id="Q9JSY9"/>
<dbReference type="EnsemblBacteria" id="CAM09176">
    <property type="protein sequence ID" value="CAM09176"/>
    <property type="gene ID" value="NMA2074"/>
</dbReference>
<dbReference type="GeneID" id="93387507"/>
<dbReference type="KEGG" id="nma:NMA2074"/>
<dbReference type="HOGENOM" id="CLU_038422_2_0_4"/>
<dbReference type="Proteomes" id="UP000000626">
    <property type="component" value="Chromosome"/>
</dbReference>
<dbReference type="GO" id="GO:0005737">
    <property type="term" value="C:cytoplasm"/>
    <property type="evidence" value="ECO:0007669"/>
    <property type="project" value="UniProtKB-SubCell"/>
</dbReference>
<dbReference type="GO" id="GO:0071424">
    <property type="term" value="F:rRNA (cytosine-N4-)-methyltransferase activity"/>
    <property type="evidence" value="ECO:0007669"/>
    <property type="project" value="UniProtKB-UniRule"/>
</dbReference>
<dbReference type="GO" id="GO:0070475">
    <property type="term" value="P:rRNA base methylation"/>
    <property type="evidence" value="ECO:0007669"/>
    <property type="project" value="UniProtKB-UniRule"/>
</dbReference>
<dbReference type="FunFam" id="1.10.150.170:FF:000001">
    <property type="entry name" value="Ribosomal RNA small subunit methyltransferase H"/>
    <property type="match status" value="1"/>
</dbReference>
<dbReference type="Gene3D" id="1.10.150.170">
    <property type="entry name" value="Putative methyltransferase TM0872, insert domain"/>
    <property type="match status" value="1"/>
</dbReference>
<dbReference type="Gene3D" id="3.40.50.150">
    <property type="entry name" value="Vaccinia Virus protein VP39"/>
    <property type="match status" value="1"/>
</dbReference>
<dbReference type="HAMAP" id="MF_01007">
    <property type="entry name" value="16SrRNA_methyltr_H"/>
    <property type="match status" value="1"/>
</dbReference>
<dbReference type="InterPro" id="IPR002903">
    <property type="entry name" value="RsmH"/>
</dbReference>
<dbReference type="InterPro" id="IPR023397">
    <property type="entry name" value="SAM-dep_MeTrfase_MraW_recog"/>
</dbReference>
<dbReference type="InterPro" id="IPR029063">
    <property type="entry name" value="SAM-dependent_MTases_sf"/>
</dbReference>
<dbReference type="NCBIfam" id="TIGR00006">
    <property type="entry name" value="16S rRNA (cytosine(1402)-N(4))-methyltransferase RsmH"/>
    <property type="match status" value="1"/>
</dbReference>
<dbReference type="PANTHER" id="PTHR11265:SF0">
    <property type="entry name" value="12S RRNA N4-METHYLCYTIDINE METHYLTRANSFERASE"/>
    <property type="match status" value="1"/>
</dbReference>
<dbReference type="PANTHER" id="PTHR11265">
    <property type="entry name" value="S-ADENOSYL-METHYLTRANSFERASE MRAW"/>
    <property type="match status" value="1"/>
</dbReference>
<dbReference type="Pfam" id="PF01795">
    <property type="entry name" value="Methyltransf_5"/>
    <property type="match status" value="1"/>
</dbReference>
<dbReference type="PIRSF" id="PIRSF004486">
    <property type="entry name" value="MraW"/>
    <property type="match status" value="1"/>
</dbReference>
<dbReference type="SUPFAM" id="SSF81799">
    <property type="entry name" value="Putative methyltransferase TM0872, insert domain"/>
    <property type="match status" value="1"/>
</dbReference>
<dbReference type="SUPFAM" id="SSF53335">
    <property type="entry name" value="S-adenosyl-L-methionine-dependent methyltransferases"/>
    <property type="match status" value="1"/>
</dbReference>
<proteinExistence type="inferred from homology"/>
<evidence type="ECO:0000255" key="1">
    <source>
        <dbReference type="HAMAP-Rule" id="MF_01007"/>
    </source>
</evidence>
<accession>Q9JSY9</accession>
<accession>A1ITQ8</accession>
<gene>
    <name evidence="1" type="primary">rsmH</name>
    <name type="synonym">mraW</name>
    <name type="ordered locus">NMA2074</name>
</gene>
<feature type="chain" id="PRO_0000108670" description="Ribosomal RNA small subunit methyltransferase H">
    <location>
        <begin position="1"/>
        <end position="328"/>
    </location>
</feature>
<feature type="binding site" evidence="1">
    <location>
        <begin position="37"/>
        <end position="39"/>
    </location>
    <ligand>
        <name>S-adenosyl-L-methionine</name>
        <dbReference type="ChEBI" id="CHEBI:59789"/>
    </ligand>
</feature>
<feature type="binding site" evidence="1">
    <location>
        <position position="57"/>
    </location>
    <ligand>
        <name>S-adenosyl-L-methionine</name>
        <dbReference type="ChEBI" id="CHEBI:59789"/>
    </ligand>
</feature>
<feature type="binding site" evidence="1">
    <location>
        <position position="83"/>
    </location>
    <ligand>
        <name>S-adenosyl-L-methionine</name>
        <dbReference type="ChEBI" id="CHEBI:59789"/>
    </ligand>
</feature>
<feature type="binding site" evidence="1">
    <location>
        <position position="104"/>
    </location>
    <ligand>
        <name>S-adenosyl-L-methionine</name>
        <dbReference type="ChEBI" id="CHEBI:59789"/>
    </ligand>
</feature>
<feature type="binding site" evidence="1">
    <location>
        <position position="111"/>
    </location>
    <ligand>
        <name>S-adenosyl-L-methionine</name>
        <dbReference type="ChEBI" id="CHEBI:59789"/>
    </ligand>
</feature>
<protein>
    <recommendedName>
        <fullName evidence="1">Ribosomal RNA small subunit methyltransferase H</fullName>
        <ecNumber evidence="1">2.1.1.199</ecNumber>
    </recommendedName>
    <alternativeName>
        <fullName evidence="1">16S rRNA m(4)C1402 methyltransferase</fullName>
    </alternativeName>
    <alternativeName>
        <fullName evidence="1">rRNA (cytosine-N(4)-)-methyltransferase RsmH</fullName>
    </alternativeName>
</protein>